<dbReference type="EC" id="2.5.1.6" evidence="1"/>
<dbReference type="EMBL" id="CP001399">
    <property type="protein sequence ID" value="ACP36091.1"/>
    <property type="molecule type" value="Genomic_DNA"/>
</dbReference>
<dbReference type="RefSeq" id="WP_012711906.1">
    <property type="nucleotide sequence ID" value="NC_012589.1"/>
</dbReference>
<dbReference type="SMR" id="C3MJ04"/>
<dbReference type="KEGG" id="sis:LS215_2098"/>
<dbReference type="HOGENOM" id="CLU_057642_0_0_2"/>
<dbReference type="OrthoDB" id="204488at2157"/>
<dbReference type="UniPathway" id="UPA00315">
    <property type="reaction ID" value="UER00080"/>
</dbReference>
<dbReference type="Proteomes" id="UP000001747">
    <property type="component" value="Chromosome"/>
</dbReference>
<dbReference type="GO" id="GO:0005524">
    <property type="term" value="F:ATP binding"/>
    <property type="evidence" value="ECO:0007669"/>
    <property type="project" value="UniProtKB-UniRule"/>
</dbReference>
<dbReference type="GO" id="GO:0000287">
    <property type="term" value="F:magnesium ion binding"/>
    <property type="evidence" value="ECO:0007669"/>
    <property type="project" value="UniProtKB-UniRule"/>
</dbReference>
<dbReference type="GO" id="GO:0004478">
    <property type="term" value="F:methionine adenosyltransferase activity"/>
    <property type="evidence" value="ECO:0007669"/>
    <property type="project" value="UniProtKB-UniRule"/>
</dbReference>
<dbReference type="GO" id="GO:0006730">
    <property type="term" value="P:one-carbon metabolic process"/>
    <property type="evidence" value="ECO:0007669"/>
    <property type="project" value="UniProtKB-KW"/>
</dbReference>
<dbReference type="GO" id="GO:0006556">
    <property type="term" value="P:S-adenosylmethionine biosynthetic process"/>
    <property type="evidence" value="ECO:0007669"/>
    <property type="project" value="UniProtKB-UniRule"/>
</dbReference>
<dbReference type="Gene3D" id="3.30.300.10">
    <property type="match status" value="1"/>
</dbReference>
<dbReference type="Gene3D" id="3.30.300.280">
    <property type="entry name" value="S-adenosylmethionine synthetase, C-terminal domain"/>
    <property type="match status" value="2"/>
</dbReference>
<dbReference type="HAMAP" id="MF_00136">
    <property type="entry name" value="S_AdoMet_synth2"/>
    <property type="match status" value="1"/>
</dbReference>
<dbReference type="InterPro" id="IPR027790">
    <property type="entry name" value="AdoMet_synthase_2_family"/>
</dbReference>
<dbReference type="InterPro" id="IPR042544">
    <property type="entry name" value="AdoMet_synthase_3"/>
</dbReference>
<dbReference type="InterPro" id="IPR002795">
    <property type="entry name" value="S-AdoMet_synthetase_arc"/>
</dbReference>
<dbReference type="NCBIfam" id="NF003365">
    <property type="entry name" value="PRK04439.1-4"/>
    <property type="match status" value="1"/>
</dbReference>
<dbReference type="NCBIfam" id="NF003366">
    <property type="entry name" value="PRK04439.1-5"/>
    <property type="match status" value="1"/>
</dbReference>
<dbReference type="PANTHER" id="PTHR36697">
    <property type="entry name" value="S-ADENOSYLMETHIONINE SYNTHASE"/>
    <property type="match status" value="1"/>
</dbReference>
<dbReference type="PANTHER" id="PTHR36697:SF1">
    <property type="entry name" value="S-ADENOSYLMETHIONINE SYNTHASE"/>
    <property type="match status" value="1"/>
</dbReference>
<dbReference type="Pfam" id="PF01941">
    <property type="entry name" value="AdoMet_Synthase"/>
    <property type="match status" value="1"/>
</dbReference>
<reference key="1">
    <citation type="journal article" date="2009" name="Proc. Natl. Acad. Sci. U.S.A.">
        <title>Biogeography of the Sulfolobus islandicus pan-genome.</title>
        <authorList>
            <person name="Reno M.L."/>
            <person name="Held N.L."/>
            <person name="Fields C.J."/>
            <person name="Burke P.V."/>
            <person name="Whitaker R.J."/>
        </authorList>
    </citation>
    <scope>NUCLEOTIDE SEQUENCE [LARGE SCALE GENOMIC DNA]</scope>
    <source>
        <strain>L.S.2.15 / Lassen #1</strain>
    </source>
</reference>
<feature type="chain" id="PRO_1000203216" description="S-adenosylmethionine synthase">
    <location>
        <begin position="1"/>
        <end position="404"/>
    </location>
</feature>
<feature type="binding site" evidence="1">
    <location>
        <begin position="139"/>
        <end position="144"/>
    </location>
    <ligand>
        <name>ATP</name>
        <dbReference type="ChEBI" id="CHEBI:30616"/>
    </ligand>
</feature>
<protein>
    <recommendedName>
        <fullName evidence="1">S-adenosylmethionine synthase</fullName>
        <shortName evidence="1">AdoMet synthase</shortName>
        <ecNumber evidence="1">2.5.1.6</ecNumber>
    </recommendedName>
    <alternativeName>
        <fullName evidence="1">Methionine adenosyltransferase</fullName>
    </alternativeName>
</protein>
<gene>
    <name evidence="1" type="primary">mat</name>
    <name type="ordered locus">LS215_2098</name>
</gene>
<evidence type="ECO:0000255" key="1">
    <source>
        <dbReference type="HAMAP-Rule" id="MF_00136"/>
    </source>
</evidence>
<name>METK_SACI2</name>
<sequence>MRNINVQLNPLSDIEKLQVELVERKGLGHPDYIADAVAEEASRKLSLYYLKKYGVILHHNLDKTLVVGGQATPRFKGGDVIQPIYIVVAGRATTEVKTESGIEQIPVGTIIIESVKEWIRNNFRYLDAEKHLIVDYKIGKGSTDLVGIFEAGKRVPLSNDTSFGVGFAPFTKLEKLVYETERHLNSKQFKAKLPEVGEDIKVMGLRRGNEVDLTIAMATISELIEDVNHYINVKEQAKNEILDLASKIAPDYDVRIYVNTGDKIDKNILYLTVTGTSAEHGDDGMTGRGNRGVGLITPMRPMSLEATAGKNPVNHVGKLYNVLANLIANKIAQEVKDVKFSQVQVLGQIGRPIDDPLIANVDVITYDGKLNDETKNEISGIVDEMLSSFNKLTELILEGKATLF</sequence>
<proteinExistence type="inferred from homology"/>
<keyword id="KW-0067">ATP-binding</keyword>
<keyword id="KW-0460">Magnesium</keyword>
<keyword id="KW-0547">Nucleotide-binding</keyword>
<keyword id="KW-0554">One-carbon metabolism</keyword>
<keyword id="KW-0808">Transferase</keyword>
<comment type="function">
    <text evidence="1">Catalyzes the formation of S-adenosylmethionine from methionine and ATP.</text>
</comment>
<comment type="catalytic activity">
    <reaction evidence="1">
        <text>L-methionine + ATP + H2O = S-adenosyl-L-methionine + phosphate + diphosphate</text>
        <dbReference type="Rhea" id="RHEA:21080"/>
        <dbReference type="ChEBI" id="CHEBI:15377"/>
        <dbReference type="ChEBI" id="CHEBI:30616"/>
        <dbReference type="ChEBI" id="CHEBI:33019"/>
        <dbReference type="ChEBI" id="CHEBI:43474"/>
        <dbReference type="ChEBI" id="CHEBI:57844"/>
        <dbReference type="ChEBI" id="CHEBI:59789"/>
        <dbReference type="EC" id="2.5.1.6"/>
    </reaction>
</comment>
<comment type="cofactor">
    <cofactor evidence="1">
        <name>Mg(2+)</name>
        <dbReference type="ChEBI" id="CHEBI:18420"/>
    </cofactor>
</comment>
<comment type="pathway">
    <text evidence="1">Amino-acid biosynthesis; S-adenosyl-L-methionine biosynthesis; S-adenosyl-L-methionine from L-methionine: step 1/1.</text>
</comment>
<comment type="similarity">
    <text evidence="1">Belongs to the AdoMet synthase 2 family.</text>
</comment>
<accession>C3MJ04</accession>
<organism>
    <name type="scientific">Saccharolobus islandicus (strain L.S.2.15 / Lassen #1)</name>
    <name type="common">Sulfolobus islandicus</name>
    <dbReference type="NCBI Taxonomy" id="429572"/>
    <lineage>
        <taxon>Archaea</taxon>
        <taxon>Thermoproteota</taxon>
        <taxon>Thermoprotei</taxon>
        <taxon>Sulfolobales</taxon>
        <taxon>Sulfolobaceae</taxon>
        <taxon>Saccharolobus</taxon>
    </lineage>
</organism>